<dbReference type="EMBL" id="CP000010">
    <property type="protein sequence ID" value="AAU47597.1"/>
    <property type="molecule type" value="Genomic_DNA"/>
</dbReference>
<dbReference type="RefSeq" id="WP_004193673.1">
    <property type="nucleotide sequence ID" value="NC_006348.1"/>
</dbReference>
<dbReference type="RefSeq" id="YP_103060.1">
    <property type="nucleotide sequence ID" value="NC_006348.1"/>
</dbReference>
<dbReference type="SMR" id="Q62JQ9"/>
<dbReference type="GeneID" id="93060533"/>
<dbReference type="KEGG" id="bma:BMA1404"/>
<dbReference type="PATRIC" id="fig|243160.12.peg.1445"/>
<dbReference type="eggNOG" id="COG0360">
    <property type="taxonomic scope" value="Bacteria"/>
</dbReference>
<dbReference type="HOGENOM" id="CLU_113441_6_1_4"/>
<dbReference type="Proteomes" id="UP000006693">
    <property type="component" value="Chromosome 1"/>
</dbReference>
<dbReference type="GO" id="GO:0022627">
    <property type="term" value="C:cytosolic small ribosomal subunit"/>
    <property type="evidence" value="ECO:0007669"/>
    <property type="project" value="TreeGrafter"/>
</dbReference>
<dbReference type="GO" id="GO:0070181">
    <property type="term" value="F:small ribosomal subunit rRNA binding"/>
    <property type="evidence" value="ECO:0007669"/>
    <property type="project" value="TreeGrafter"/>
</dbReference>
<dbReference type="GO" id="GO:0003735">
    <property type="term" value="F:structural constituent of ribosome"/>
    <property type="evidence" value="ECO:0007669"/>
    <property type="project" value="InterPro"/>
</dbReference>
<dbReference type="GO" id="GO:0006412">
    <property type="term" value="P:translation"/>
    <property type="evidence" value="ECO:0007669"/>
    <property type="project" value="UniProtKB-UniRule"/>
</dbReference>
<dbReference type="CDD" id="cd00473">
    <property type="entry name" value="bS6"/>
    <property type="match status" value="1"/>
</dbReference>
<dbReference type="Gene3D" id="3.30.70.60">
    <property type="match status" value="1"/>
</dbReference>
<dbReference type="HAMAP" id="MF_00360">
    <property type="entry name" value="Ribosomal_bS6"/>
    <property type="match status" value="1"/>
</dbReference>
<dbReference type="InterPro" id="IPR000529">
    <property type="entry name" value="Ribosomal_bS6"/>
</dbReference>
<dbReference type="InterPro" id="IPR035980">
    <property type="entry name" value="Ribosomal_bS6_sf"/>
</dbReference>
<dbReference type="InterPro" id="IPR020814">
    <property type="entry name" value="Ribosomal_S6_plastid/chlpt"/>
</dbReference>
<dbReference type="InterPro" id="IPR014717">
    <property type="entry name" value="Transl_elong_EF1B/ribsomal_bS6"/>
</dbReference>
<dbReference type="NCBIfam" id="TIGR00166">
    <property type="entry name" value="S6"/>
    <property type="match status" value="1"/>
</dbReference>
<dbReference type="PANTHER" id="PTHR21011">
    <property type="entry name" value="MITOCHONDRIAL 28S RIBOSOMAL PROTEIN S6"/>
    <property type="match status" value="1"/>
</dbReference>
<dbReference type="PANTHER" id="PTHR21011:SF1">
    <property type="entry name" value="SMALL RIBOSOMAL SUBUNIT PROTEIN BS6M"/>
    <property type="match status" value="1"/>
</dbReference>
<dbReference type="Pfam" id="PF01250">
    <property type="entry name" value="Ribosomal_S6"/>
    <property type="match status" value="1"/>
</dbReference>
<dbReference type="SUPFAM" id="SSF54995">
    <property type="entry name" value="Ribosomal protein S6"/>
    <property type="match status" value="1"/>
</dbReference>
<proteinExistence type="inferred from homology"/>
<keyword id="KW-1185">Reference proteome</keyword>
<keyword id="KW-0687">Ribonucleoprotein</keyword>
<keyword id="KW-0689">Ribosomal protein</keyword>
<keyword id="KW-0694">RNA-binding</keyword>
<keyword id="KW-0699">rRNA-binding</keyword>
<sequence>MRHYEIVFIVHPDQSEQVPAMIERYKSTITSHGGQIHRVEDWGRRQLAYMIEKLAKAHYVCMNIECDQTTLDELEHAFKFNDAVLRHLIVKMKKAETGPSPMMKEVQREEAKKAAAAQPTEAQA</sequence>
<gene>
    <name evidence="1" type="primary">rpsF</name>
    <name type="ordered locus">BMA1404</name>
</gene>
<name>RS6_BURMA</name>
<organism>
    <name type="scientific">Burkholderia mallei (strain ATCC 23344)</name>
    <dbReference type="NCBI Taxonomy" id="243160"/>
    <lineage>
        <taxon>Bacteria</taxon>
        <taxon>Pseudomonadati</taxon>
        <taxon>Pseudomonadota</taxon>
        <taxon>Betaproteobacteria</taxon>
        <taxon>Burkholderiales</taxon>
        <taxon>Burkholderiaceae</taxon>
        <taxon>Burkholderia</taxon>
        <taxon>pseudomallei group</taxon>
    </lineage>
</organism>
<evidence type="ECO:0000255" key="1">
    <source>
        <dbReference type="HAMAP-Rule" id="MF_00360"/>
    </source>
</evidence>
<evidence type="ECO:0000256" key="2">
    <source>
        <dbReference type="SAM" id="MobiDB-lite"/>
    </source>
</evidence>
<evidence type="ECO:0000305" key="3"/>
<comment type="function">
    <text evidence="1">Binds together with bS18 to 16S ribosomal RNA.</text>
</comment>
<comment type="similarity">
    <text evidence="1">Belongs to the bacterial ribosomal protein bS6 family.</text>
</comment>
<protein>
    <recommendedName>
        <fullName evidence="1">Small ribosomal subunit protein bS6</fullName>
    </recommendedName>
    <alternativeName>
        <fullName evidence="3">30S ribosomal protein S6</fullName>
    </alternativeName>
</protein>
<accession>Q62JQ9</accession>
<feature type="chain" id="PRO_0000176743" description="Small ribosomal subunit protein bS6">
    <location>
        <begin position="1"/>
        <end position="124"/>
    </location>
</feature>
<feature type="region of interest" description="Disordered" evidence="2">
    <location>
        <begin position="96"/>
        <end position="124"/>
    </location>
</feature>
<feature type="compositionally biased region" description="Low complexity" evidence="2">
    <location>
        <begin position="114"/>
        <end position="124"/>
    </location>
</feature>
<reference key="1">
    <citation type="journal article" date="2004" name="Proc. Natl. Acad. Sci. U.S.A.">
        <title>Structural flexibility in the Burkholderia mallei genome.</title>
        <authorList>
            <person name="Nierman W.C."/>
            <person name="DeShazer D."/>
            <person name="Kim H.S."/>
            <person name="Tettelin H."/>
            <person name="Nelson K.E."/>
            <person name="Feldblyum T.V."/>
            <person name="Ulrich R.L."/>
            <person name="Ronning C.M."/>
            <person name="Brinkac L.M."/>
            <person name="Daugherty S.C."/>
            <person name="Davidsen T.D."/>
            <person name="DeBoy R.T."/>
            <person name="Dimitrov G."/>
            <person name="Dodson R.J."/>
            <person name="Durkin A.S."/>
            <person name="Gwinn M.L."/>
            <person name="Haft D.H."/>
            <person name="Khouri H.M."/>
            <person name="Kolonay J.F."/>
            <person name="Madupu R."/>
            <person name="Mohammoud Y."/>
            <person name="Nelson W.C."/>
            <person name="Radune D."/>
            <person name="Romero C.M."/>
            <person name="Sarria S."/>
            <person name="Selengut J."/>
            <person name="Shamblin C."/>
            <person name="Sullivan S.A."/>
            <person name="White O."/>
            <person name="Yu Y."/>
            <person name="Zafar N."/>
            <person name="Zhou L."/>
            <person name="Fraser C.M."/>
        </authorList>
    </citation>
    <scope>NUCLEOTIDE SEQUENCE [LARGE SCALE GENOMIC DNA]</scope>
    <source>
        <strain>ATCC 23344</strain>
    </source>
</reference>